<name>PURR_ACTPJ</name>
<comment type="function">
    <text evidence="1">Is the main repressor of the genes involved in the de novo synthesis of purine nucleotides, regulating purB, purC, purEK, purF, purHD, purL, purMN and guaBA expression. PurR is allosterically activated to bind its cognate DNA by binding the purine corepressors, hypoxanthine or guanine, thereby effecting transcription repression.</text>
</comment>
<comment type="pathway">
    <text>Purine metabolism; purine nucleotide biosynthesis [regulation].</text>
</comment>
<comment type="subunit">
    <text evidence="1">Homodimer.</text>
</comment>
<comment type="domain">
    <text evidence="1">Consists of two structural and functional domains: an N-terminal DNA-binding domain, approximately the first 60 residues, and a larger C-terminal domain, approximately 280 residues, which imparts the function of corepressor binding and oligomerization.</text>
</comment>
<gene>
    <name evidence="1" type="primary">purR</name>
    <name type="ordered locus">APJL_0826</name>
</gene>
<sequence length="336" mass="37783">MATIKDVAKLAGVSTTTVSHVINKTRFVAEDTSKAVWDAIQQLNYSPSAVARSLKVNTTKSIGMIITTSEAPYFAEIVLAVEEHCYQQGYSLFLCNTQNEPEKIQNHLDMLIKKRVDGVLVMCSEYTRDSLELFNGTNIPMVVMDWGKADDHSDRILDNSFEGGYLATQHLIENGHKDIGVIAGHLSKTLSKERYEGFLKAMHEANLPVRQEWIYEGDFEPESGFEQMNNLLRLEKLPTAIFCFSDTIALGAISALSEKGLSVPSDMSIIGYDNIHSSRFYSPPLTTIHQSKSRLGVKALNILLERIKIDKTQYQPQTIEFHPELVLRRSVRNLNK</sequence>
<proteinExistence type="inferred from homology"/>
<protein>
    <recommendedName>
        <fullName evidence="1">HTH-type transcriptional repressor PurR</fullName>
    </recommendedName>
    <alternativeName>
        <fullName evidence="1">Pur regulon repressor</fullName>
    </alternativeName>
    <alternativeName>
        <fullName evidence="1">Purine nucleotide synthesis repressor</fullName>
    </alternativeName>
</protein>
<dbReference type="EMBL" id="CP000687">
    <property type="protein sequence ID" value="ABY69384.1"/>
    <property type="molecule type" value="Genomic_DNA"/>
</dbReference>
<dbReference type="RefSeq" id="WP_005597280.1">
    <property type="nucleotide sequence ID" value="NC_010278.1"/>
</dbReference>
<dbReference type="SMR" id="B0BP99"/>
<dbReference type="GeneID" id="48599006"/>
<dbReference type="KEGG" id="apj:APJL_0826"/>
<dbReference type="HOGENOM" id="CLU_037628_6_2_6"/>
<dbReference type="UniPathway" id="UPA00488"/>
<dbReference type="Proteomes" id="UP000008547">
    <property type="component" value="Chromosome"/>
</dbReference>
<dbReference type="GO" id="GO:0003700">
    <property type="term" value="F:DNA-binding transcription factor activity"/>
    <property type="evidence" value="ECO:0007669"/>
    <property type="project" value="TreeGrafter"/>
</dbReference>
<dbReference type="GO" id="GO:0000976">
    <property type="term" value="F:transcription cis-regulatory region binding"/>
    <property type="evidence" value="ECO:0007669"/>
    <property type="project" value="TreeGrafter"/>
</dbReference>
<dbReference type="GO" id="GO:0045892">
    <property type="term" value="P:negative regulation of DNA-templated transcription"/>
    <property type="evidence" value="ECO:0007669"/>
    <property type="project" value="UniProtKB-UniRule"/>
</dbReference>
<dbReference type="GO" id="GO:0006164">
    <property type="term" value="P:purine nucleotide biosynthetic process"/>
    <property type="evidence" value="ECO:0007669"/>
    <property type="project" value="UniProtKB-UniPathway"/>
</dbReference>
<dbReference type="CDD" id="cd01392">
    <property type="entry name" value="HTH_LacI"/>
    <property type="match status" value="1"/>
</dbReference>
<dbReference type="CDD" id="cd06275">
    <property type="entry name" value="PBP1_PurR"/>
    <property type="match status" value="1"/>
</dbReference>
<dbReference type="FunFam" id="1.10.260.40:FF:000002">
    <property type="entry name" value="HTH-type transcriptional repressor PurR"/>
    <property type="match status" value="1"/>
</dbReference>
<dbReference type="Gene3D" id="3.40.50.2300">
    <property type="match status" value="2"/>
</dbReference>
<dbReference type="Gene3D" id="1.10.260.40">
    <property type="entry name" value="lambda repressor-like DNA-binding domains"/>
    <property type="match status" value="1"/>
</dbReference>
<dbReference type="HAMAP" id="MF_01277">
    <property type="entry name" value="HTH_type_PurR"/>
    <property type="match status" value="1"/>
</dbReference>
<dbReference type="InterPro" id="IPR000843">
    <property type="entry name" value="HTH_LacI"/>
</dbReference>
<dbReference type="InterPro" id="IPR010982">
    <property type="entry name" value="Lambda_DNA-bd_dom_sf"/>
</dbReference>
<dbReference type="InterPro" id="IPR001761">
    <property type="entry name" value="Peripla_BP/Lac1_sug-bd_dom"/>
</dbReference>
<dbReference type="InterPro" id="IPR028082">
    <property type="entry name" value="Peripla_BP_I"/>
</dbReference>
<dbReference type="InterPro" id="IPR023588">
    <property type="entry name" value="Tscrpt_reg_HTH_PurR"/>
</dbReference>
<dbReference type="NCBIfam" id="NF007979">
    <property type="entry name" value="PRK10703.1"/>
    <property type="match status" value="1"/>
</dbReference>
<dbReference type="PANTHER" id="PTHR30146:SF148">
    <property type="entry name" value="HTH-TYPE TRANSCRIPTIONAL REPRESSOR PURR-RELATED"/>
    <property type="match status" value="1"/>
</dbReference>
<dbReference type="PANTHER" id="PTHR30146">
    <property type="entry name" value="LACI-RELATED TRANSCRIPTIONAL REPRESSOR"/>
    <property type="match status" value="1"/>
</dbReference>
<dbReference type="Pfam" id="PF00356">
    <property type="entry name" value="LacI"/>
    <property type="match status" value="1"/>
</dbReference>
<dbReference type="Pfam" id="PF00532">
    <property type="entry name" value="Peripla_BP_1"/>
    <property type="match status" value="1"/>
</dbReference>
<dbReference type="PRINTS" id="PR00036">
    <property type="entry name" value="HTHLACI"/>
</dbReference>
<dbReference type="SMART" id="SM00354">
    <property type="entry name" value="HTH_LACI"/>
    <property type="match status" value="1"/>
</dbReference>
<dbReference type="SUPFAM" id="SSF47413">
    <property type="entry name" value="lambda repressor-like DNA-binding domains"/>
    <property type="match status" value="1"/>
</dbReference>
<dbReference type="SUPFAM" id="SSF53822">
    <property type="entry name" value="Periplasmic binding protein-like I"/>
    <property type="match status" value="1"/>
</dbReference>
<dbReference type="PROSITE" id="PS00356">
    <property type="entry name" value="HTH_LACI_1"/>
    <property type="match status" value="1"/>
</dbReference>
<dbReference type="PROSITE" id="PS50932">
    <property type="entry name" value="HTH_LACI_2"/>
    <property type="match status" value="1"/>
</dbReference>
<evidence type="ECO:0000255" key="1">
    <source>
        <dbReference type="HAMAP-Rule" id="MF_01277"/>
    </source>
</evidence>
<feature type="chain" id="PRO_1000140284" description="HTH-type transcriptional repressor PurR">
    <location>
        <begin position="1"/>
        <end position="336"/>
    </location>
</feature>
<feature type="domain" description="HTH lacI-type" evidence="1">
    <location>
        <begin position="2"/>
        <end position="56"/>
    </location>
</feature>
<feature type="DNA-binding region" description="H-T-H motif" evidence="1">
    <location>
        <begin position="4"/>
        <end position="23"/>
    </location>
</feature>
<feature type="DNA-binding region" evidence="1">
    <location>
        <begin position="48"/>
        <end position="56"/>
    </location>
</feature>
<feature type="binding site" evidence="1">
    <location>
        <position position="73"/>
    </location>
    <ligand>
        <name>hypoxanthine</name>
        <dbReference type="ChEBI" id="CHEBI:17368"/>
    </ligand>
</feature>
<feature type="binding site" evidence="1">
    <location>
        <position position="188"/>
    </location>
    <ligand>
        <name>hypoxanthine</name>
        <dbReference type="ChEBI" id="CHEBI:17368"/>
    </ligand>
</feature>
<feature type="binding site" evidence="1">
    <location>
        <position position="219"/>
    </location>
    <ligand>
        <name>hypoxanthine</name>
        <dbReference type="ChEBI" id="CHEBI:17368"/>
    </ligand>
</feature>
<feature type="binding site" evidence="1">
    <location>
        <position position="273"/>
    </location>
    <ligand>
        <name>hypoxanthine</name>
        <dbReference type="ChEBI" id="CHEBI:17368"/>
    </ligand>
</feature>
<reference key="1">
    <citation type="journal article" date="2008" name="PLoS ONE">
        <title>Genome biology of Actinobacillus pleuropneumoniae JL03, an isolate of serotype 3 prevalent in China.</title>
        <authorList>
            <person name="Xu Z."/>
            <person name="Zhou Y."/>
            <person name="Li L."/>
            <person name="Zhou R."/>
            <person name="Xiao S."/>
            <person name="Wan Y."/>
            <person name="Zhang S."/>
            <person name="Wang K."/>
            <person name="Li W."/>
            <person name="Li L."/>
            <person name="Jin H."/>
            <person name="Kang M."/>
            <person name="Dalai B."/>
            <person name="Li T."/>
            <person name="Liu L."/>
            <person name="Cheng Y."/>
            <person name="Zhang L."/>
            <person name="Xu T."/>
            <person name="Zheng H."/>
            <person name="Pu S."/>
            <person name="Wang B."/>
            <person name="Gu W."/>
            <person name="Zhang X.L."/>
            <person name="Zhu G.-F."/>
            <person name="Wang S."/>
            <person name="Zhao G.-P."/>
            <person name="Chen H."/>
        </authorList>
    </citation>
    <scope>NUCLEOTIDE SEQUENCE [LARGE SCALE GENOMIC DNA]</scope>
    <source>
        <strain>JL03</strain>
    </source>
</reference>
<keyword id="KW-0238">DNA-binding</keyword>
<keyword id="KW-0658">Purine biosynthesis</keyword>
<keyword id="KW-0678">Repressor</keyword>
<keyword id="KW-0804">Transcription</keyword>
<keyword id="KW-0805">Transcription regulation</keyword>
<accession>B0BP99</accession>
<organism>
    <name type="scientific">Actinobacillus pleuropneumoniae serotype 3 (strain JL03)</name>
    <dbReference type="NCBI Taxonomy" id="434271"/>
    <lineage>
        <taxon>Bacteria</taxon>
        <taxon>Pseudomonadati</taxon>
        <taxon>Pseudomonadota</taxon>
        <taxon>Gammaproteobacteria</taxon>
        <taxon>Pasteurellales</taxon>
        <taxon>Pasteurellaceae</taxon>
        <taxon>Actinobacillus</taxon>
    </lineage>
</organism>